<gene>
    <name evidence="1" type="primary">efp</name>
    <name type="ordered locus">Psyr_3628</name>
</gene>
<proteinExistence type="inferred from homology"/>
<reference key="1">
    <citation type="journal article" date="2005" name="Proc. Natl. Acad. Sci. U.S.A.">
        <title>Comparison of the complete genome sequences of Pseudomonas syringae pv. syringae B728a and pv. tomato DC3000.</title>
        <authorList>
            <person name="Feil H."/>
            <person name="Feil W.S."/>
            <person name="Chain P."/>
            <person name="Larimer F."/>
            <person name="Dibartolo G."/>
            <person name="Copeland A."/>
            <person name="Lykidis A."/>
            <person name="Trong S."/>
            <person name="Nolan M."/>
            <person name="Goltsman E."/>
            <person name="Thiel J."/>
            <person name="Malfatti S."/>
            <person name="Loper J.E."/>
            <person name="Lapidus A."/>
            <person name="Detter J.C."/>
            <person name="Land M."/>
            <person name="Richardson P.M."/>
            <person name="Kyrpides N.C."/>
            <person name="Ivanova N."/>
            <person name="Lindow S.E."/>
        </authorList>
    </citation>
    <scope>NUCLEOTIDE SEQUENCE [LARGE SCALE GENOMIC DNA]</scope>
    <source>
        <strain>B728a</strain>
    </source>
</reference>
<feature type="chain" id="PRO_1000010819" description="Elongation factor P">
    <location>
        <begin position="1"/>
        <end position="189"/>
    </location>
</feature>
<comment type="function">
    <text evidence="1">Involved in peptide bond synthesis. Stimulates efficient translation and peptide-bond synthesis on native or reconstituted 70S ribosomes in vitro. Probably functions indirectly by altering the affinity of the ribosome for aminoacyl-tRNA, thus increasing their reactivity as acceptors for peptidyl transferase.</text>
</comment>
<comment type="pathway">
    <text evidence="1">Protein biosynthesis; polypeptide chain elongation.</text>
</comment>
<comment type="subcellular location">
    <subcellularLocation>
        <location evidence="1">Cytoplasm</location>
    </subcellularLocation>
</comment>
<comment type="similarity">
    <text evidence="1">Belongs to the elongation factor P family.</text>
</comment>
<name>EFP_PSEU2</name>
<protein>
    <recommendedName>
        <fullName evidence="1">Elongation factor P</fullName>
        <shortName evidence="1">EF-P</shortName>
    </recommendedName>
</protein>
<sequence length="189" mass="21124">MKTGKELKPGTVIRLENDPWLVQKAEFTKSGRNSAIMKTKLKNLLTGYKTEIVYSADDKLDDVILDRKEATLSFISGDTYTFMDTSDYTMYELNAEDIESVLPFVEEGMTDVCEAVFFEDRLVSVELPTTIVRQVDYTEGSARGDTSGKVMKPAKLKNGTELSVADFIEIGDMIEIDTREGGSYKGRAK</sequence>
<keyword id="KW-0963">Cytoplasm</keyword>
<keyword id="KW-0251">Elongation factor</keyword>
<keyword id="KW-0648">Protein biosynthesis</keyword>
<accession>Q4ZQB2</accession>
<evidence type="ECO:0000255" key="1">
    <source>
        <dbReference type="HAMAP-Rule" id="MF_00141"/>
    </source>
</evidence>
<organism>
    <name type="scientific">Pseudomonas syringae pv. syringae (strain B728a)</name>
    <dbReference type="NCBI Taxonomy" id="205918"/>
    <lineage>
        <taxon>Bacteria</taxon>
        <taxon>Pseudomonadati</taxon>
        <taxon>Pseudomonadota</taxon>
        <taxon>Gammaproteobacteria</taxon>
        <taxon>Pseudomonadales</taxon>
        <taxon>Pseudomonadaceae</taxon>
        <taxon>Pseudomonas</taxon>
        <taxon>Pseudomonas syringae</taxon>
    </lineage>
</organism>
<dbReference type="EMBL" id="CP000075">
    <property type="protein sequence ID" value="AAY38660.1"/>
    <property type="molecule type" value="Genomic_DNA"/>
</dbReference>
<dbReference type="RefSeq" id="WP_003404205.1">
    <property type="nucleotide sequence ID" value="NC_007005.1"/>
</dbReference>
<dbReference type="RefSeq" id="YP_236698.1">
    <property type="nucleotide sequence ID" value="NC_007005.1"/>
</dbReference>
<dbReference type="SMR" id="Q4ZQB2"/>
<dbReference type="STRING" id="205918.Psyr_3628"/>
<dbReference type="KEGG" id="psb:Psyr_3628"/>
<dbReference type="PATRIC" id="fig|205918.7.peg.3725"/>
<dbReference type="eggNOG" id="COG0231">
    <property type="taxonomic scope" value="Bacteria"/>
</dbReference>
<dbReference type="HOGENOM" id="CLU_074944_2_1_6"/>
<dbReference type="OrthoDB" id="9801844at2"/>
<dbReference type="UniPathway" id="UPA00345"/>
<dbReference type="Proteomes" id="UP000000426">
    <property type="component" value="Chromosome"/>
</dbReference>
<dbReference type="GO" id="GO:0005737">
    <property type="term" value="C:cytoplasm"/>
    <property type="evidence" value="ECO:0007669"/>
    <property type="project" value="UniProtKB-SubCell"/>
</dbReference>
<dbReference type="GO" id="GO:0003746">
    <property type="term" value="F:translation elongation factor activity"/>
    <property type="evidence" value="ECO:0007669"/>
    <property type="project" value="UniProtKB-UniRule"/>
</dbReference>
<dbReference type="GO" id="GO:0043043">
    <property type="term" value="P:peptide biosynthetic process"/>
    <property type="evidence" value="ECO:0007669"/>
    <property type="project" value="InterPro"/>
</dbReference>
<dbReference type="CDD" id="cd04470">
    <property type="entry name" value="S1_EF-P_repeat_1"/>
    <property type="match status" value="1"/>
</dbReference>
<dbReference type="FunFam" id="2.30.30.30:FF:000003">
    <property type="entry name" value="Elongation factor P"/>
    <property type="match status" value="1"/>
</dbReference>
<dbReference type="FunFam" id="2.40.50.140:FF:000004">
    <property type="entry name" value="Elongation factor P"/>
    <property type="match status" value="1"/>
</dbReference>
<dbReference type="Gene3D" id="2.30.30.30">
    <property type="match status" value="1"/>
</dbReference>
<dbReference type="Gene3D" id="2.40.50.140">
    <property type="entry name" value="Nucleic acid-binding proteins"/>
    <property type="match status" value="2"/>
</dbReference>
<dbReference type="HAMAP" id="MF_00141">
    <property type="entry name" value="EF_P"/>
    <property type="match status" value="1"/>
</dbReference>
<dbReference type="InterPro" id="IPR015365">
    <property type="entry name" value="Elong-fact-P_C"/>
</dbReference>
<dbReference type="InterPro" id="IPR012340">
    <property type="entry name" value="NA-bd_OB-fold"/>
</dbReference>
<dbReference type="InterPro" id="IPR014722">
    <property type="entry name" value="Rib_uL2_dom2"/>
</dbReference>
<dbReference type="InterPro" id="IPR020599">
    <property type="entry name" value="Transl_elong_fac_P/YeiP"/>
</dbReference>
<dbReference type="InterPro" id="IPR013185">
    <property type="entry name" value="Transl_elong_KOW-like"/>
</dbReference>
<dbReference type="InterPro" id="IPR001059">
    <property type="entry name" value="Transl_elong_P/YeiP_cen"/>
</dbReference>
<dbReference type="InterPro" id="IPR011768">
    <property type="entry name" value="Transl_elongation_fac_P"/>
</dbReference>
<dbReference type="InterPro" id="IPR008991">
    <property type="entry name" value="Translation_prot_SH3-like_sf"/>
</dbReference>
<dbReference type="NCBIfam" id="NF001810">
    <property type="entry name" value="PRK00529.1"/>
    <property type="match status" value="1"/>
</dbReference>
<dbReference type="PANTHER" id="PTHR30053">
    <property type="entry name" value="ELONGATION FACTOR P"/>
    <property type="match status" value="1"/>
</dbReference>
<dbReference type="PANTHER" id="PTHR30053:SF12">
    <property type="entry name" value="ELONGATION FACTOR P (EF-P) FAMILY PROTEIN"/>
    <property type="match status" value="1"/>
</dbReference>
<dbReference type="Pfam" id="PF01132">
    <property type="entry name" value="EFP"/>
    <property type="match status" value="1"/>
</dbReference>
<dbReference type="Pfam" id="PF08207">
    <property type="entry name" value="EFP_N"/>
    <property type="match status" value="1"/>
</dbReference>
<dbReference type="Pfam" id="PF09285">
    <property type="entry name" value="Elong-fact-P_C"/>
    <property type="match status" value="1"/>
</dbReference>
<dbReference type="PIRSF" id="PIRSF005901">
    <property type="entry name" value="EF-P"/>
    <property type="match status" value="1"/>
</dbReference>
<dbReference type="SMART" id="SM01185">
    <property type="entry name" value="EFP"/>
    <property type="match status" value="1"/>
</dbReference>
<dbReference type="SMART" id="SM00841">
    <property type="entry name" value="Elong-fact-P_C"/>
    <property type="match status" value="1"/>
</dbReference>
<dbReference type="SUPFAM" id="SSF50249">
    <property type="entry name" value="Nucleic acid-binding proteins"/>
    <property type="match status" value="2"/>
</dbReference>
<dbReference type="SUPFAM" id="SSF50104">
    <property type="entry name" value="Translation proteins SH3-like domain"/>
    <property type="match status" value="1"/>
</dbReference>